<name>NU3M_CYPCA</name>
<feature type="chain" id="PRO_0000117731" description="NADH-ubiquinone oxidoreductase chain 3">
    <location>
        <begin position="1"/>
        <end position="116"/>
    </location>
</feature>
<feature type="transmembrane region" description="Helical" evidence="2">
    <location>
        <begin position="3"/>
        <end position="23"/>
    </location>
</feature>
<feature type="transmembrane region" description="Helical" evidence="2">
    <location>
        <begin position="56"/>
        <end position="76"/>
    </location>
</feature>
<feature type="transmembrane region" description="Helical" evidence="2">
    <location>
        <begin position="87"/>
        <end position="107"/>
    </location>
</feature>
<protein>
    <recommendedName>
        <fullName>NADH-ubiquinone oxidoreductase chain 3</fullName>
        <ecNumber>7.1.1.2</ecNumber>
    </recommendedName>
    <alternativeName>
        <fullName>NADH dehydrogenase subunit 3</fullName>
    </alternativeName>
</protein>
<gene>
    <name type="primary">MT-ND3</name>
    <name type="synonym">MTND3</name>
    <name type="synonym">NADH3</name>
    <name type="synonym">ND3</name>
</gene>
<dbReference type="EC" id="7.1.1.2"/>
<dbReference type="EMBL" id="X61010">
    <property type="protein sequence ID" value="CAA43334.1"/>
    <property type="molecule type" value="Genomic_DNA"/>
</dbReference>
<dbReference type="PIR" id="S36004">
    <property type="entry name" value="S36004"/>
</dbReference>
<dbReference type="RefSeq" id="NP_007089.1">
    <property type="nucleotide sequence ID" value="NC_001606.1"/>
</dbReference>
<dbReference type="SMR" id="P24974"/>
<dbReference type="GeneID" id="807771"/>
<dbReference type="KEGG" id="ccar:807771"/>
<dbReference type="CTD" id="4537"/>
<dbReference type="OMA" id="GPRRYNR"/>
<dbReference type="OrthoDB" id="154075at2759"/>
<dbReference type="Proteomes" id="UP000694384">
    <property type="component" value="Unplaced"/>
</dbReference>
<dbReference type="Proteomes" id="UP000694427">
    <property type="component" value="Unplaced"/>
</dbReference>
<dbReference type="Proteomes" id="UP000694700">
    <property type="component" value="Unplaced"/>
</dbReference>
<dbReference type="Proteomes" id="UP000694701">
    <property type="component" value="Unplaced"/>
</dbReference>
<dbReference type="Proteomes" id="UP001155660">
    <property type="component" value="Mitochondrion MT"/>
</dbReference>
<dbReference type="GO" id="GO:0031966">
    <property type="term" value="C:mitochondrial membrane"/>
    <property type="evidence" value="ECO:0007669"/>
    <property type="project" value="UniProtKB-SubCell"/>
</dbReference>
<dbReference type="GO" id="GO:0030964">
    <property type="term" value="C:NADH dehydrogenase complex"/>
    <property type="evidence" value="ECO:0007669"/>
    <property type="project" value="TreeGrafter"/>
</dbReference>
<dbReference type="GO" id="GO:0008137">
    <property type="term" value="F:NADH dehydrogenase (ubiquinone) activity"/>
    <property type="evidence" value="ECO:0007669"/>
    <property type="project" value="UniProtKB-EC"/>
</dbReference>
<dbReference type="FunFam" id="1.20.58.1610:FF:000004">
    <property type="entry name" value="NADH-quinone oxidoreductase subunit A"/>
    <property type="match status" value="1"/>
</dbReference>
<dbReference type="Gene3D" id="1.20.58.1610">
    <property type="entry name" value="NADH:ubiquinone/plastoquinone oxidoreductase, chain 3"/>
    <property type="match status" value="1"/>
</dbReference>
<dbReference type="InterPro" id="IPR000440">
    <property type="entry name" value="NADH_UbQ/plastoQ_OxRdtase_su3"/>
</dbReference>
<dbReference type="InterPro" id="IPR038430">
    <property type="entry name" value="NDAH_ubi_oxred_su3_sf"/>
</dbReference>
<dbReference type="PANTHER" id="PTHR11058">
    <property type="entry name" value="NADH-UBIQUINONE OXIDOREDUCTASE CHAIN 3"/>
    <property type="match status" value="1"/>
</dbReference>
<dbReference type="PANTHER" id="PTHR11058:SF9">
    <property type="entry name" value="NADH-UBIQUINONE OXIDOREDUCTASE CHAIN 3"/>
    <property type="match status" value="1"/>
</dbReference>
<dbReference type="Pfam" id="PF00507">
    <property type="entry name" value="Oxidored_q4"/>
    <property type="match status" value="1"/>
</dbReference>
<accession>P24974</accession>
<organism>
    <name type="scientific">Cyprinus carpio</name>
    <name type="common">Common carp</name>
    <dbReference type="NCBI Taxonomy" id="7962"/>
    <lineage>
        <taxon>Eukaryota</taxon>
        <taxon>Metazoa</taxon>
        <taxon>Chordata</taxon>
        <taxon>Craniata</taxon>
        <taxon>Vertebrata</taxon>
        <taxon>Euteleostomi</taxon>
        <taxon>Actinopterygii</taxon>
        <taxon>Neopterygii</taxon>
        <taxon>Teleostei</taxon>
        <taxon>Ostariophysi</taxon>
        <taxon>Cypriniformes</taxon>
        <taxon>Cyprinidae</taxon>
        <taxon>Cyprininae</taxon>
        <taxon>Cyprinus</taxon>
    </lineage>
</organism>
<geneLocation type="mitochondrion"/>
<reference key="1">
    <citation type="journal article" date="1994" name="J. Mol. Evol.">
        <title>The complete nucleotide sequence and gene organization of carp (Cyprinus carpio) mitochondrial genome.</title>
        <authorList>
            <person name="Chang Y.S."/>
            <person name="Huang F.L."/>
            <person name="Lo T.B."/>
        </authorList>
    </citation>
    <scope>NUCLEOTIDE SEQUENCE [GENOMIC DNA]</scope>
</reference>
<sequence length="116" mass="13071">MNLIMTILTITVALSLILATVSFWLPQMNPDAEKLSPYECGFDPLGSARLPFSLRFFLVAILFLLFDLEIALLLPLPWGDQLHNPTGTFFWATTVLILLTLGLIYEWTQGGLEWAE</sequence>
<keyword id="KW-0249">Electron transport</keyword>
<keyword id="KW-0472">Membrane</keyword>
<keyword id="KW-0496">Mitochondrion</keyword>
<keyword id="KW-0520">NAD</keyword>
<keyword id="KW-1185">Reference proteome</keyword>
<keyword id="KW-0679">Respiratory chain</keyword>
<keyword id="KW-1278">Translocase</keyword>
<keyword id="KW-0812">Transmembrane</keyword>
<keyword id="KW-1133">Transmembrane helix</keyword>
<keyword id="KW-0813">Transport</keyword>
<keyword id="KW-0830">Ubiquinone</keyword>
<proteinExistence type="inferred from homology"/>
<comment type="function">
    <text evidence="1">Core subunit of the mitochondrial membrane respiratory chain NADH dehydrogenase (Complex I) that is believed to belong to the minimal assembly required for catalysis. Complex I functions in the transfer of electrons from NADH to the respiratory chain. The immediate electron acceptor for the enzyme is believed to be ubiquinone (By similarity).</text>
</comment>
<comment type="catalytic activity">
    <reaction>
        <text>a ubiquinone + NADH + 5 H(+)(in) = a ubiquinol + NAD(+) + 4 H(+)(out)</text>
        <dbReference type="Rhea" id="RHEA:29091"/>
        <dbReference type="Rhea" id="RHEA-COMP:9565"/>
        <dbReference type="Rhea" id="RHEA-COMP:9566"/>
        <dbReference type="ChEBI" id="CHEBI:15378"/>
        <dbReference type="ChEBI" id="CHEBI:16389"/>
        <dbReference type="ChEBI" id="CHEBI:17976"/>
        <dbReference type="ChEBI" id="CHEBI:57540"/>
        <dbReference type="ChEBI" id="CHEBI:57945"/>
        <dbReference type="EC" id="7.1.1.2"/>
    </reaction>
</comment>
<comment type="subcellular location">
    <subcellularLocation>
        <location evidence="1">Mitochondrion membrane</location>
        <topology evidence="1">Multi-pass membrane protein</topology>
    </subcellularLocation>
</comment>
<comment type="similarity">
    <text evidence="3">Belongs to the complex I subunit 3 family.</text>
</comment>
<evidence type="ECO:0000250" key="1"/>
<evidence type="ECO:0000255" key="2"/>
<evidence type="ECO:0000305" key="3"/>